<protein>
    <recommendedName>
        <fullName evidence="5">Dehydrodolichyl diphosphate synthase complex subunit SPAC4D7.04c</fullName>
        <ecNumber evidence="4">2.5.1.87</ecNumber>
    </recommendedName>
    <alternativeName>
        <fullName evidence="5">Ditrans,polycis-polyprenyl diphosphate synthase ((2E,6E)-farnesyl diphosphate specific)</fullName>
    </alternativeName>
</protein>
<keyword id="KW-0256">Endoplasmic reticulum</keyword>
<keyword id="KW-0460">Magnesium</keyword>
<keyword id="KW-0472">Membrane</keyword>
<keyword id="KW-1185">Reference proteome</keyword>
<keyword id="KW-0808">Transferase</keyword>
<proteinExistence type="evidence at protein level"/>
<organism>
    <name type="scientific">Schizosaccharomyces pombe (strain 972 / ATCC 24843)</name>
    <name type="common">Fission yeast</name>
    <dbReference type="NCBI Taxonomy" id="284812"/>
    <lineage>
        <taxon>Eukaryota</taxon>
        <taxon>Fungi</taxon>
        <taxon>Dikarya</taxon>
        <taxon>Ascomycota</taxon>
        <taxon>Taphrinomycotina</taxon>
        <taxon>Schizosaccharomycetes</taxon>
        <taxon>Schizosaccharomycetales</taxon>
        <taxon>Schizosaccharomycetaceae</taxon>
        <taxon>Schizosaccharomyces</taxon>
    </lineage>
</organism>
<dbReference type="EC" id="2.5.1.87" evidence="4"/>
<dbReference type="EMBL" id="CU329670">
    <property type="protein sequence ID" value="CAB11276.1"/>
    <property type="molecule type" value="Genomic_DNA"/>
</dbReference>
<dbReference type="PIR" id="T38795">
    <property type="entry name" value="T38795"/>
</dbReference>
<dbReference type="SMR" id="O14171"/>
<dbReference type="BioGRID" id="280034">
    <property type="interactions" value="1"/>
</dbReference>
<dbReference type="FunCoup" id="O14171">
    <property type="interactions" value="481"/>
</dbReference>
<dbReference type="STRING" id="284812.O14171"/>
<dbReference type="iPTMnet" id="O14171"/>
<dbReference type="PaxDb" id="4896-SPAC4D7.04c.1"/>
<dbReference type="EnsemblFungi" id="SPAC4D7.04c.1">
    <property type="protein sequence ID" value="SPAC4D7.04c.1:pep"/>
    <property type="gene ID" value="SPAC4D7.04c"/>
</dbReference>
<dbReference type="KEGG" id="spo:2543620"/>
<dbReference type="PomBase" id="SPAC4D7.04c"/>
<dbReference type="VEuPathDB" id="FungiDB:SPAC4D7.04c"/>
<dbReference type="eggNOG" id="KOG1602">
    <property type="taxonomic scope" value="Eukaryota"/>
</dbReference>
<dbReference type="HOGENOM" id="CLU_038505_0_4_1"/>
<dbReference type="InParanoid" id="O14171"/>
<dbReference type="OMA" id="FDRRDLW"/>
<dbReference type="PhylomeDB" id="O14171"/>
<dbReference type="Reactome" id="R-SPO-446199">
    <property type="pathway name" value="Synthesis of Dolichyl-phosphate"/>
</dbReference>
<dbReference type="UniPathway" id="UPA00378"/>
<dbReference type="PRO" id="PR:O14171"/>
<dbReference type="Proteomes" id="UP000002485">
    <property type="component" value="Chromosome I"/>
</dbReference>
<dbReference type="GO" id="GO:1904423">
    <property type="term" value="C:dehydrodolichyl diphosphate synthase complex"/>
    <property type="evidence" value="ECO:0000318"/>
    <property type="project" value="GO_Central"/>
</dbReference>
<dbReference type="GO" id="GO:0005783">
    <property type="term" value="C:endoplasmic reticulum"/>
    <property type="evidence" value="ECO:0000318"/>
    <property type="project" value="GO_Central"/>
</dbReference>
<dbReference type="GO" id="GO:0005789">
    <property type="term" value="C:endoplasmic reticulum membrane"/>
    <property type="evidence" value="ECO:0007669"/>
    <property type="project" value="UniProtKB-SubCell"/>
</dbReference>
<dbReference type="GO" id="GO:0005811">
    <property type="term" value="C:lipid droplet"/>
    <property type="evidence" value="ECO:0000318"/>
    <property type="project" value="GO_Central"/>
</dbReference>
<dbReference type="GO" id="GO:0016020">
    <property type="term" value="C:membrane"/>
    <property type="evidence" value="ECO:0000318"/>
    <property type="project" value="GO_Central"/>
</dbReference>
<dbReference type="GO" id="GO:0045547">
    <property type="term" value="F:ditrans,polycis-polyprenyl diphosphate synthase [(2E,6E)-farnesyl diphosphate specific] activity"/>
    <property type="evidence" value="ECO:0007669"/>
    <property type="project" value="UniProtKB-EC"/>
</dbReference>
<dbReference type="GO" id="GO:0019408">
    <property type="term" value="P:dolichol biosynthetic process"/>
    <property type="evidence" value="ECO:0000314"/>
    <property type="project" value="PomBase"/>
</dbReference>
<dbReference type="GO" id="GO:0006486">
    <property type="term" value="P:protein glycosylation"/>
    <property type="evidence" value="ECO:0000318"/>
    <property type="project" value="GO_Central"/>
</dbReference>
<dbReference type="CDD" id="cd00475">
    <property type="entry name" value="Cis_IPPS"/>
    <property type="match status" value="1"/>
</dbReference>
<dbReference type="FunFam" id="3.40.1180.10:FF:000002">
    <property type="entry name" value="Alkyl transferase"/>
    <property type="match status" value="1"/>
</dbReference>
<dbReference type="Gene3D" id="3.40.1180.10">
    <property type="entry name" value="Decaprenyl diphosphate synthase-like"/>
    <property type="match status" value="1"/>
</dbReference>
<dbReference type="HAMAP" id="MF_01139">
    <property type="entry name" value="ISPT"/>
    <property type="match status" value="1"/>
</dbReference>
<dbReference type="InterPro" id="IPR001441">
    <property type="entry name" value="UPP_synth-like"/>
</dbReference>
<dbReference type="InterPro" id="IPR018520">
    <property type="entry name" value="UPP_synth-like_CS"/>
</dbReference>
<dbReference type="InterPro" id="IPR036424">
    <property type="entry name" value="UPP_synth-like_sf"/>
</dbReference>
<dbReference type="NCBIfam" id="TIGR00055">
    <property type="entry name" value="uppS"/>
    <property type="match status" value="1"/>
</dbReference>
<dbReference type="PANTHER" id="PTHR10291:SF43">
    <property type="entry name" value="DEHYDRODOLICHYL DIPHOSPHATE SYNTHASE COMPLEX SUBUNIT DHDDS"/>
    <property type="match status" value="1"/>
</dbReference>
<dbReference type="PANTHER" id="PTHR10291">
    <property type="entry name" value="DEHYDRODOLICHYL DIPHOSPHATE SYNTHASE FAMILY MEMBER"/>
    <property type="match status" value="1"/>
</dbReference>
<dbReference type="Pfam" id="PF01255">
    <property type="entry name" value="Prenyltransf"/>
    <property type="match status" value="1"/>
</dbReference>
<dbReference type="SUPFAM" id="SSF64005">
    <property type="entry name" value="Undecaprenyl diphosphate synthase"/>
    <property type="match status" value="1"/>
</dbReference>
<dbReference type="PROSITE" id="PS01066">
    <property type="entry name" value="UPP_SYNTHASE"/>
    <property type="match status" value="1"/>
</dbReference>
<gene>
    <name type="ORF">SPAC4D7.04c</name>
</gene>
<evidence type="ECO:0000250" key="1">
    <source>
        <dbReference type="UniProtKB" id="P35196"/>
    </source>
</evidence>
<evidence type="ECO:0000250" key="2">
    <source>
        <dbReference type="UniProtKB" id="Q86SQ9"/>
    </source>
</evidence>
<evidence type="ECO:0000269" key="3">
    <source>
    </source>
</evidence>
<evidence type="ECO:0000303" key="4">
    <source>
    </source>
</evidence>
<evidence type="ECO:0000305" key="5"/>
<reference key="1">
    <citation type="journal article" date="2002" name="Nature">
        <title>The genome sequence of Schizosaccharomyces pombe.</title>
        <authorList>
            <person name="Wood V."/>
            <person name="Gwilliam R."/>
            <person name="Rajandream M.A."/>
            <person name="Lyne M.H."/>
            <person name="Lyne R."/>
            <person name="Stewart A."/>
            <person name="Sgouros J.G."/>
            <person name="Peat N."/>
            <person name="Hayles J."/>
            <person name="Baker S.G."/>
            <person name="Basham D."/>
            <person name="Bowman S."/>
            <person name="Brooks K."/>
            <person name="Brown D."/>
            <person name="Brown S."/>
            <person name="Chillingworth T."/>
            <person name="Churcher C.M."/>
            <person name="Collins M."/>
            <person name="Connor R."/>
            <person name="Cronin A."/>
            <person name="Davis P."/>
            <person name="Feltwell T."/>
            <person name="Fraser A."/>
            <person name="Gentles S."/>
            <person name="Goble A."/>
            <person name="Hamlin N."/>
            <person name="Harris D.E."/>
            <person name="Hidalgo J."/>
            <person name="Hodgson G."/>
            <person name="Holroyd S."/>
            <person name="Hornsby T."/>
            <person name="Howarth S."/>
            <person name="Huckle E.J."/>
            <person name="Hunt S."/>
            <person name="Jagels K."/>
            <person name="James K.D."/>
            <person name="Jones L."/>
            <person name="Jones M."/>
            <person name="Leather S."/>
            <person name="McDonald S."/>
            <person name="McLean J."/>
            <person name="Mooney P."/>
            <person name="Moule S."/>
            <person name="Mungall K.L."/>
            <person name="Murphy L.D."/>
            <person name="Niblett D."/>
            <person name="Odell C."/>
            <person name="Oliver K."/>
            <person name="O'Neil S."/>
            <person name="Pearson D."/>
            <person name="Quail M.A."/>
            <person name="Rabbinowitsch E."/>
            <person name="Rutherford K.M."/>
            <person name="Rutter S."/>
            <person name="Saunders D."/>
            <person name="Seeger K."/>
            <person name="Sharp S."/>
            <person name="Skelton J."/>
            <person name="Simmonds M.N."/>
            <person name="Squares R."/>
            <person name="Squares S."/>
            <person name="Stevens K."/>
            <person name="Taylor K."/>
            <person name="Taylor R.G."/>
            <person name="Tivey A."/>
            <person name="Walsh S.V."/>
            <person name="Warren T."/>
            <person name="Whitehead S."/>
            <person name="Woodward J.R."/>
            <person name="Volckaert G."/>
            <person name="Aert R."/>
            <person name="Robben J."/>
            <person name="Grymonprez B."/>
            <person name="Weltjens I."/>
            <person name="Vanstreels E."/>
            <person name="Rieger M."/>
            <person name="Schaefer M."/>
            <person name="Mueller-Auer S."/>
            <person name="Gabel C."/>
            <person name="Fuchs M."/>
            <person name="Duesterhoeft A."/>
            <person name="Fritzc C."/>
            <person name="Holzer E."/>
            <person name="Moestl D."/>
            <person name="Hilbert H."/>
            <person name="Borzym K."/>
            <person name="Langer I."/>
            <person name="Beck A."/>
            <person name="Lehrach H."/>
            <person name="Reinhardt R."/>
            <person name="Pohl T.M."/>
            <person name="Eger P."/>
            <person name="Zimmermann W."/>
            <person name="Wedler H."/>
            <person name="Wambutt R."/>
            <person name="Purnelle B."/>
            <person name="Goffeau A."/>
            <person name="Cadieu E."/>
            <person name="Dreano S."/>
            <person name="Gloux S."/>
            <person name="Lelaure V."/>
            <person name="Mottier S."/>
            <person name="Galibert F."/>
            <person name="Aves S.J."/>
            <person name="Xiang Z."/>
            <person name="Hunt C."/>
            <person name="Moore K."/>
            <person name="Hurst S.M."/>
            <person name="Lucas M."/>
            <person name="Rochet M."/>
            <person name="Gaillardin C."/>
            <person name="Tallada V.A."/>
            <person name="Garzon A."/>
            <person name="Thode G."/>
            <person name="Daga R.R."/>
            <person name="Cruzado L."/>
            <person name="Jimenez J."/>
            <person name="Sanchez M."/>
            <person name="del Rey F."/>
            <person name="Benito J."/>
            <person name="Dominguez A."/>
            <person name="Revuelta J.L."/>
            <person name="Moreno S."/>
            <person name="Armstrong J."/>
            <person name="Forsburg S.L."/>
            <person name="Cerutti L."/>
            <person name="Lowe T."/>
            <person name="McCombie W.R."/>
            <person name="Paulsen I."/>
            <person name="Potashkin J."/>
            <person name="Shpakovski G.V."/>
            <person name="Ussery D."/>
            <person name="Barrell B.G."/>
            <person name="Nurse P."/>
        </authorList>
    </citation>
    <scope>NUCLEOTIDE SEQUENCE [LARGE SCALE GENOMIC DNA]</scope>
    <source>
        <strain>972 / ATCC 24843</strain>
    </source>
</reference>
<reference key="2">
    <citation type="journal article" date="2014" name="Cell Metab.">
        <title>Mutation of Nogo-B receptor, a subunit of cis-prenyltransferase, causes a congenital disorder of glycosylation.</title>
        <authorList>
            <person name="Park E.J."/>
            <person name="Grabinska K.A."/>
            <person name="Guan Z."/>
            <person name="Stranecky V."/>
            <person name="Hartmannova H."/>
            <person name="Hodanova K."/>
            <person name="Baresova V."/>
            <person name="Sovova J."/>
            <person name="Jozsef L."/>
            <person name="Ondruskova N."/>
            <person name="Hansikova H."/>
            <person name="Honzik T."/>
            <person name="Zeman J."/>
            <person name="Hulkova H."/>
            <person name="Wen R."/>
            <person name="Kmoch S."/>
            <person name="Sessa W.C."/>
        </authorList>
    </citation>
    <scope>CATALYTIC ACTIVITY</scope>
    <scope>FUNCTION</scope>
    <scope>SUBUNIT</scope>
</reference>
<comment type="function">
    <text evidence="3">With nus1, forms the dehydrodolichyl diphosphate synthase (DDS) complex, an essential component of the dolichol monophosphate (Dol-P) biosynthetic machinery. Adds multiple copies of isopentenyl pyrophosphate (IPP) to farnesyl pyrophosphate (FPP) to produce dehydrodolichyl diphosphate (Dedol-PP), a precursor of dolichol which is utilized as a sugar carrier in protein glycosylation in the endoplasmic reticulum (ER).</text>
</comment>
<comment type="catalytic activity">
    <reaction evidence="3">
        <text>n isopentenyl diphosphate + (2E,6E)-farnesyl diphosphate = a di-trans,poly-cis-polyprenyl diphosphate + n diphosphate</text>
        <dbReference type="Rhea" id="RHEA:53008"/>
        <dbReference type="Rhea" id="RHEA-COMP:19494"/>
        <dbReference type="ChEBI" id="CHEBI:33019"/>
        <dbReference type="ChEBI" id="CHEBI:128769"/>
        <dbReference type="ChEBI" id="CHEBI:136960"/>
        <dbReference type="ChEBI" id="CHEBI:175763"/>
        <dbReference type="EC" id="2.5.1.87"/>
    </reaction>
</comment>
<comment type="cofactor">
    <cofactor evidence="2">
        <name>Mg(2+)</name>
        <dbReference type="ChEBI" id="CHEBI:18420"/>
    </cofactor>
</comment>
<comment type="pathway">
    <text evidence="5">Protein modification; protein glycosylation.</text>
</comment>
<comment type="subunit">
    <text evidence="4">Forms an active dehydrodolichyl diphosphate synthase complex with nus1.</text>
</comment>
<comment type="subcellular location">
    <subcellularLocation>
        <location evidence="1">Endoplasmic reticulum membrane</location>
        <topology evidence="1">Peripheral membrane protein</topology>
    </subcellularLocation>
</comment>
<comment type="similarity">
    <text evidence="5">Belongs to the UPP synthase family.</text>
</comment>
<accession>O14171</accession>
<feature type="chain" id="PRO_0000123761" description="Dehydrodolichyl diphosphate synthase complex subunit SPAC4D7.04c">
    <location>
        <begin position="1"/>
        <end position="264"/>
    </location>
</feature>
<name>YE54_SCHPO</name>
<sequence>MGNLSGWFIHCPPLQWTLDQLETMMINTIKRGKVPQHIAFVMDGNRRWARQRRMETIEGHSSGFEALKSLLKVCLKLGVKEVSAFTFSIENFKRSKYEVDMLMEIAKNSLTQITAHGDLVDQYGIRIRIVGDLSRLQPDVLETALKAVEITKHNTKATLNVCFPYTSRHEIATSVQSIVKMAEDGTITPEDIDEDIFEKNLLIKDSLPLDLLIRTSGVERLSDFMLWQCHKNTEIKFIDFYWPDFSIWKFFPMLIQYQLQNQPA</sequence>